<sequence>MASIEEIAHQIIEQQMGEIVTEQPTGQKIQIVTALDHNTQGKQFILTNHDGSTPNKVILARQDSTPGKVFFTTPDAAGVNQLFFTTPDLSTQQLQFLTDNSSSEQGPNKVFDLCVVCGDKASGRHYGEVTCEGCKGFFKRSIRKNLVYSCRGSKDCIINKHHRNRCQYCRLQRCIAFGMKQDSVQCERKPIEVSREKSSNCAASTEKIYIRKDLRSPLAATPTFVTDSETARSAGLLDSGMFVNIHQSGIKTESTMLMTPDKAVSCQGDLSTLASVVTSLANLGKTKDPAPNSNEVSMIESLSNGDTSYTSVCEFHQEMQTNGDVSRAFDTLAKALNPGESTACQSSGEGMEGNVHLIAGDSSINYIEKEGPLLSDSHVAFRLTMPSPMPEYLNVHYIGESASRLLFLSMHWALSIPSFQALGQENSISLVKAYWNELFTLGLAQCWQVMNVATILATFVNCLHSSLQQDKISAERRKLLMEHIFKLQEFCNSMVKLCIDGYEYAYLKAIVLFSPDHPGLENMEQIEKFQEKAYVEFQDYITKTYPDDTYRLSRLLLRLPALRLMNATITEELFFKGLIGNVRIDSVIPHILKMEPADYNSQIIGHSI</sequence>
<gene>
    <name type="primary">NR2C1</name>
</gene>
<name>NR2C1_BOVIN</name>
<keyword id="KW-0010">Activator</keyword>
<keyword id="KW-0238">DNA-binding</keyword>
<keyword id="KW-1017">Isopeptide bond</keyword>
<keyword id="KW-0479">Metal-binding</keyword>
<keyword id="KW-0539">Nucleus</keyword>
<keyword id="KW-0597">Phosphoprotein</keyword>
<keyword id="KW-0675">Receptor</keyword>
<keyword id="KW-1185">Reference proteome</keyword>
<keyword id="KW-0678">Repressor</keyword>
<keyword id="KW-0804">Transcription</keyword>
<keyword id="KW-0805">Transcription regulation</keyword>
<keyword id="KW-0832">Ubl conjugation</keyword>
<keyword id="KW-0862">Zinc</keyword>
<keyword id="KW-0863">Zinc-finger</keyword>
<feature type="chain" id="PRO_0000369402" description="Nuclear receptor subfamily 2 group C member 1">
    <location>
        <begin position="1"/>
        <end position="608"/>
    </location>
</feature>
<feature type="domain" description="NR LBD" evidence="5">
    <location>
        <begin position="353"/>
        <end position="595"/>
    </location>
</feature>
<feature type="DNA-binding region" description="Nuclear receptor" evidence="4">
    <location>
        <begin position="111"/>
        <end position="186"/>
    </location>
</feature>
<feature type="zinc finger region" description="NR C4-type" evidence="4">
    <location>
        <begin position="114"/>
        <end position="134"/>
    </location>
</feature>
<feature type="zinc finger region" description="NR C4-type" evidence="4">
    <location>
        <begin position="150"/>
        <end position="169"/>
    </location>
</feature>
<feature type="region of interest" description="Required for interaction with KAT2B" evidence="1">
    <location>
        <begin position="1"/>
        <end position="179"/>
    </location>
</feature>
<feature type="region of interest" description="Required for interaction with NRIP1" evidence="1">
    <location>
        <begin position="589"/>
        <end position="608"/>
    </location>
</feature>
<feature type="modified residue" description="Phosphoserine" evidence="3">
    <location>
        <position position="198"/>
    </location>
</feature>
<feature type="modified residue" description="Phosphoserine" evidence="2">
    <location>
        <position position="216"/>
    </location>
</feature>
<feature type="modified residue" description="Phosphothreonine" evidence="2">
    <location>
        <position position="221"/>
    </location>
</feature>
<feature type="modified residue" description="Phosphothreonine; by MAPK1" evidence="3">
    <location>
        <position position="223"/>
    </location>
</feature>
<feature type="modified residue" description="Phosphoserine; by PKC" evidence="3">
    <location>
        <position position="586"/>
    </location>
</feature>
<feature type="cross-link" description="Glycyl lysine isopeptide (Lys-Gly) (interchain with G-Cter in SUMO); alternate" evidence="1">
    <location>
        <position position="251"/>
    </location>
</feature>
<feature type="cross-link" description="Glycyl lysine isopeptide (Lys-Gly) (interchain with G-Cter in SUMO2); alternate" evidence="2">
    <location>
        <position position="251"/>
    </location>
</feature>
<feature type="cross-link" description="Glycyl lysine isopeptide (Lys-Gly) (interchain with G-Cter in SUMO2)" evidence="2">
    <location>
        <position position="593"/>
    </location>
</feature>
<reference key="1">
    <citation type="submission" date="2006-10" db="EMBL/GenBank/DDBJ databases">
        <authorList>
            <consortium name="NIH - Mammalian Gene Collection (MGC) project"/>
        </authorList>
    </citation>
    <scope>NUCLEOTIDE SEQUENCE [LARGE SCALE MRNA]</scope>
    <source>
        <strain>Crossbred X Angus</strain>
        <tissue>Liver</tissue>
    </source>
</reference>
<proteinExistence type="evidence at transcript level"/>
<comment type="function">
    <text evidence="1">Orphan nuclear receptor. Binds the IR7 element in the promoter of its own gene in an autoregulatory negative feedback mechanism. Primarily repressor of a broad range of genes including ESR1 and RARB. Together with NR2C2, forms the core of the DRED (direct repeat erythroid-definitive) complex that represses embryonic and fetal globin transcription. Binds to hormone response elements (HREs) consisting of two 5'-AGGTCA-3' half site direct repeat consensus sequences (By similarity). Also activator of OCT4 gene expression. Plays a fundamental role in early embryogenesis and regulates embryonic stem cell proliferation and differentiation. Mediator of retinoic acid-regulated preadipocyte proliferation (By similarity).</text>
</comment>
<comment type="subunit">
    <text evidence="1">Homodimer (By similarity). Heterodimer; with NR2C2 which is required for chromatin remodeling and for binding to promoter regions such as globin DR1 repeats (By similarity). Interacts with ESR1; the interaction prevents homodimerization of ESR1 and suppresses its transcriptional activity and cell growth. Interacts with NRIP1 (via its LXXLL motifs); the interaction provides corepressor activity. Interacts with HDAC3 (via the DNA-binding domain); the interaction recruits phosphorylated NR2C1 to PML bodies for sumoylation. Interacts with HDAC4 (via the DNA-binding domain). Interacts with PIAS1; the interaction is required for sumoylation of NR2C1. Interacts with UBE2I; the interaction is required for sumoylation of NR2C1. Interacts with KAT2B; the interaction acts as a corepressor of gene expression (By similarity).</text>
</comment>
<comment type="subcellular location">
    <subcellularLocation>
        <location evidence="4">Nucleus</location>
    </subcellularLocation>
    <subcellularLocation>
        <location evidence="1">Nucleus</location>
        <location evidence="1">PML body</location>
    </subcellularLocation>
    <text evidence="1">Recruited by HDAC3, after all-trans retinoic acid stimulated MAPK1-mediated Thr-223 phosphorylation, to PML bodies for subsequent sumoylation.</text>
</comment>
<comment type="PTM">
    <text evidence="1">Sumoylation requires both PIAS1 and UBE2I. Sumoylation appears to dissociate NR2C1 from the PML nuclear bodies. Enhances the interaction with NRIP1 but inhibits interaction with KAT2B. In proliferating cells, stimulation by all-trans retinoic acid, activation of MAPK1-mediated phosphorylation and recruitment to PML bodies with subsequent sumoylation, suppresses OCT4 expression (By similarity).</text>
</comment>
<comment type="PTM">
    <text evidence="1">Phosphorylated on several serine and threonine residues. Phosphorylation on Thr-223, stimulated by all-trans retinoic acid (atRA) mediates PML location and sumoylation in proliferating cells which then modulates its association with effector molecules, KAT2B and NRIP1. Phosphorylation on Ser-586 by PKC is important for protein stability and function as activator of RARB (By similarity).</text>
</comment>
<comment type="similarity">
    <text evidence="6">Belongs to the nuclear hormone receptor family. NR2 subfamily.</text>
</comment>
<protein>
    <recommendedName>
        <fullName>Nuclear receptor subfamily 2 group C member 1</fullName>
    </recommendedName>
</protein>
<dbReference type="EMBL" id="BC126643">
    <property type="protein sequence ID" value="AAI26644.1"/>
    <property type="molecule type" value="mRNA"/>
</dbReference>
<dbReference type="RefSeq" id="NP_001071372.1">
    <property type="nucleotide sequence ID" value="NM_001077904.1"/>
</dbReference>
<dbReference type="FunCoup" id="A0JNE3">
    <property type="interactions" value="3558"/>
</dbReference>
<dbReference type="STRING" id="9913.ENSBTAP00000023577"/>
<dbReference type="PaxDb" id="9913-ENSBTAP00000023577"/>
<dbReference type="GeneID" id="511407"/>
<dbReference type="KEGG" id="bta:511407"/>
<dbReference type="CTD" id="7181"/>
<dbReference type="eggNOG" id="KOG3575">
    <property type="taxonomic scope" value="Eukaryota"/>
</dbReference>
<dbReference type="InParanoid" id="A0JNE3"/>
<dbReference type="OrthoDB" id="10024684at2759"/>
<dbReference type="Proteomes" id="UP000009136">
    <property type="component" value="Unplaced"/>
</dbReference>
<dbReference type="GO" id="GO:0016605">
    <property type="term" value="C:PML body"/>
    <property type="evidence" value="ECO:0007669"/>
    <property type="project" value="UniProtKB-SubCell"/>
</dbReference>
<dbReference type="GO" id="GO:0004879">
    <property type="term" value="F:nuclear receptor activity"/>
    <property type="evidence" value="ECO:0000318"/>
    <property type="project" value="GO_Central"/>
</dbReference>
<dbReference type="GO" id="GO:0000978">
    <property type="term" value="F:RNA polymerase II cis-regulatory region sequence-specific DNA binding"/>
    <property type="evidence" value="ECO:0000318"/>
    <property type="project" value="GO_Central"/>
</dbReference>
<dbReference type="GO" id="GO:0008270">
    <property type="term" value="F:zinc ion binding"/>
    <property type="evidence" value="ECO:0007669"/>
    <property type="project" value="UniProtKB-KW"/>
</dbReference>
<dbReference type="GO" id="GO:0030154">
    <property type="term" value="P:cell differentiation"/>
    <property type="evidence" value="ECO:0000318"/>
    <property type="project" value="GO_Central"/>
</dbReference>
<dbReference type="GO" id="GO:0006357">
    <property type="term" value="P:regulation of transcription by RNA polymerase II"/>
    <property type="evidence" value="ECO:0000318"/>
    <property type="project" value="GO_Central"/>
</dbReference>
<dbReference type="CDD" id="cd06967">
    <property type="entry name" value="NR_DBD_TR2_like"/>
    <property type="match status" value="1"/>
</dbReference>
<dbReference type="CDD" id="cd06952">
    <property type="entry name" value="NR_LBD_TR2_like"/>
    <property type="match status" value="1"/>
</dbReference>
<dbReference type="FunFam" id="1.10.565.10:FF:000012">
    <property type="entry name" value="Nuclear receptor subfamily 2 group C member 1"/>
    <property type="match status" value="1"/>
</dbReference>
<dbReference type="FunFam" id="3.30.50.10:FF:000015">
    <property type="entry name" value="Nuclear receptor subfamily 2, group C, member 1"/>
    <property type="match status" value="1"/>
</dbReference>
<dbReference type="Gene3D" id="3.30.50.10">
    <property type="entry name" value="Erythroid Transcription Factor GATA-1, subunit A"/>
    <property type="match status" value="1"/>
</dbReference>
<dbReference type="Gene3D" id="1.10.565.10">
    <property type="entry name" value="Retinoid X Receptor"/>
    <property type="match status" value="1"/>
</dbReference>
<dbReference type="InterPro" id="IPR035500">
    <property type="entry name" value="NHR-like_dom_sf"/>
</dbReference>
<dbReference type="InterPro" id="IPR048245">
    <property type="entry name" value="NR2C1/2-like_DBD"/>
</dbReference>
<dbReference type="InterPro" id="IPR048246">
    <property type="entry name" value="NR2C1/2-like_LBD"/>
</dbReference>
<dbReference type="InterPro" id="IPR000536">
    <property type="entry name" value="Nucl_hrmn_rcpt_lig-bd"/>
</dbReference>
<dbReference type="InterPro" id="IPR050274">
    <property type="entry name" value="Nuclear_hormone_rcpt_NR2"/>
</dbReference>
<dbReference type="InterPro" id="IPR001723">
    <property type="entry name" value="Nuclear_hrmn_rcpt"/>
</dbReference>
<dbReference type="InterPro" id="IPR001628">
    <property type="entry name" value="Znf_hrmn_rcpt"/>
</dbReference>
<dbReference type="InterPro" id="IPR013088">
    <property type="entry name" value="Znf_NHR/GATA"/>
</dbReference>
<dbReference type="PANTHER" id="PTHR24083">
    <property type="entry name" value="NUCLEAR HORMONE RECEPTOR"/>
    <property type="match status" value="1"/>
</dbReference>
<dbReference type="Pfam" id="PF00104">
    <property type="entry name" value="Hormone_recep"/>
    <property type="match status" value="1"/>
</dbReference>
<dbReference type="Pfam" id="PF00105">
    <property type="entry name" value="zf-C4"/>
    <property type="match status" value="1"/>
</dbReference>
<dbReference type="PRINTS" id="PR00398">
    <property type="entry name" value="STRDHORMONER"/>
</dbReference>
<dbReference type="PRINTS" id="PR00047">
    <property type="entry name" value="STROIDFINGER"/>
</dbReference>
<dbReference type="SMART" id="SM00430">
    <property type="entry name" value="HOLI"/>
    <property type="match status" value="1"/>
</dbReference>
<dbReference type="SMART" id="SM00399">
    <property type="entry name" value="ZnF_C4"/>
    <property type="match status" value="1"/>
</dbReference>
<dbReference type="SUPFAM" id="SSF57716">
    <property type="entry name" value="Glucocorticoid receptor-like (DNA-binding domain)"/>
    <property type="match status" value="1"/>
</dbReference>
<dbReference type="SUPFAM" id="SSF48508">
    <property type="entry name" value="Nuclear receptor ligand-binding domain"/>
    <property type="match status" value="1"/>
</dbReference>
<dbReference type="PROSITE" id="PS51843">
    <property type="entry name" value="NR_LBD"/>
    <property type="match status" value="1"/>
</dbReference>
<dbReference type="PROSITE" id="PS00031">
    <property type="entry name" value="NUCLEAR_REC_DBD_1"/>
    <property type="match status" value="1"/>
</dbReference>
<dbReference type="PROSITE" id="PS51030">
    <property type="entry name" value="NUCLEAR_REC_DBD_2"/>
    <property type="match status" value="1"/>
</dbReference>
<evidence type="ECO:0000250" key="1"/>
<evidence type="ECO:0000250" key="2">
    <source>
        <dbReference type="UniProtKB" id="P13056"/>
    </source>
</evidence>
<evidence type="ECO:0000250" key="3">
    <source>
        <dbReference type="UniProtKB" id="Q505F1"/>
    </source>
</evidence>
<evidence type="ECO:0000255" key="4">
    <source>
        <dbReference type="PROSITE-ProRule" id="PRU00407"/>
    </source>
</evidence>
<evidence type="ECO:0000255" key="5">
    <source>
        <dbReference type="PROSITE-ProRule" id="PRU01189"/>
    </source>
</evidence>
<evidence type="ECO:0000305" key="6"/>
<organism>
    <name type="scientific">Bos taurus</name>
    <name type="common">Bovine</name>
    <dbReference type="NCBI Taxonomy" id="9913"/>
    <lineage>
        <taxon>Eukaryota</taxon>
        <taxon>Metazoa</taxon>
        <taxon>Chordata</taxon>
        <taxon>Craniata</taxon>
        <taxon>Vertebrata</taxon>
        <taxon>Euteleostomi</taxon>
        <taxon>Mammalia</taxon>
        <taxon>Eutheria</taxon>
        <taxon>Laurasiatheria</taxon>
        <taxon>Artiodactyla</taxon>
        <taxon>Ruminantia</taxon>
        <taxon>Pecora</taxon>
        <taxon>Bovidae</taxon>
        <taxon>Bovinae</taxon>
        <taxon>Bos</taxon>
    </lineage>
</organism>
<accession>A0JNE3</accession>